<evidence type="ECO:0000255" key="1">
    <source>
        <dbReference type="HAMAP-Rule" id="MF_00662"/>
    </source>
</evidence>
<reference key="1">
    <citation type="submission" date="2006-08" db="EMBL/GenBank/DDBJ databases">
        <title>Complete sequence of Alkalilimnicola ehrilichei MLHE-1.</title>
        <authorList>
            <person name="Copeland A."/>
            <person name="Lucas S."/>
            <person name="Lapidus A."/>
            <person name="Barry K."/>
            <person name="Detter J.C."/>
            <person name="Glavina del Rio T."/>
            <person name="Hammon N."/>
            <person name="Israni S."/>
            <person name="Dalin E."/>
            <person name="Tice H."/>
            <person name="Pitluck S."/>
            <person name="Sims D."/>
            <person name="Brettin T."/>
            <person name="Bruce D."/>
            <person name="Han C."/>
            <person name="Tapia R."/>
            <person name="Gilna P."/>
            <person name="Schmutz J."/>
            <person name="Larimer F."/>
            <person name="Land M."/>
            <person name="Hauser L."/>
            <person name="Kyrpides N."/>
            <person name="Mikhailova N."/>
            <person name="Oremland R.S."/>
            <person name="Hoeft S.E."/>
            <person name="Switzer-Blum J."/>
            <person name="Kulp T."/>
            <person name="King G."/>
            <person name="Tabita R."/>
            <person name="Witte B."/>
            <person name="Santini J.M."/>
            <person name="Basu P."/>
            <person name="Hollibaugh J.T."/>
            <person name="Xie G."/>
            <person name="Stolz J.F."/>
            <person name="Richardson P."/>
        </authorList>
    </citation>
    <scope>NUCLEOTIDE SEQUENCE [LARGE SCALE GENOMIC DNA]</scope>
    <source>
        <strain>ATCC BAA-1101 / DSM 17681 / MLHE-1</strain>
    </source>
</reference>
<gene>
    <name evidence="1" type="primary">psd</name>
    <name type="ordered locus">Mlg_0862</name>
</gene>
<accession>Q0AAC1</accession>
<dbReference type="EC" id="4.1.1.65" evidence="1"/>
<dbReference type="EMBL" id="CP000453">
    <property type="protein sequence ID" value="ABI56216.1"/>
    <property type="molecule type" value="Genomic_DNA"/>
</dbReference>
<dbReference type="RefSeq" id="WP_011628611.1">
    <property type="nucleotide sequence ID" value="NC_008340.1"/>
</dbReference>
<dbReference type="SMR" id="Q0AAC1"/>
<dbReference type="KEGG" id="aeh:Mlg_0862"/>
<dbReference type="eggNOG" id="COG0688">
    <property type="taxonomic scope" value="Bacteria"/>
</dbReference>
<dbReference type="HOGENOM" id="CLU_029061_4_1_6"/>
<dbReference type="OrthoDB" id="9802030at2"/>
<dbReference type="UniPathway" id="UPA00558">
    <property type="reaction ID" value="UER00616"/>
</dbReference>
<dbReference type="Proteomes" id="UP000001962">
    <property type="component" value="Chromosome"/>
</dbReference>
<dbReference type="GO" id="GO:0005886">
    <property type="term" value="C:plasma membrane"/>
    <property type="evidence" value="ECO:0007669"/>
    <property type="project" value="UniProtKB-SubCell"/>
</dbReference>
<dbReference type="GO" id="GO:0004609">
    <property type="term" value="F:phosphatidylserine decarboxylase activity"/>
    <property type="evidence" value="ECO:0007669"/>
    <property type="project" value="UniProtKB-UniRule"/>
</dbReference>
<dbReference type="GO" id="GO:0006646">
    <property type="term" value="P:phosphatidylethanolamine biosynthetic process"/>
    <property type="evidence" value="ECO:0007669"/>
    <property type="project" value="UniProtKB-UniRule"/>
</dbReference>
<dbReference type="HAMAP" id="MF_00662">
    <property type="entry name" value="PS_decarb_PSD_B_type1"/>
    <property type="match status" value="1"/>
</dbReference>
<dbReference type="InterPro" id="IPR003817">
    <property type="entry name" value="PS_Dcarbxylase"/>
</dbReference>
<dbReference type="InterPro" id="IPR033177">
    <property type="entry name" value="PSD-B"/>
</dbReference>
<dbReference type="InterPro" id="IPR033178">
    <property type="entry name" value="PSD_type1_pro"/>
</dbReference>
<dbReference type="NCBIfam" id="TIGR00163">
    <property type="entry name" value="PS_decarb"/>
    <property type="match status" value="1"/>
</dbReference>
<dbReference type="PANTHER" id="PTHR10067">
    <property type="entry name" value="PHOSPHATIDYLSERINE DECARBOXYLASE"/>
    <property type="match status" value="1"/>
</dbReference>
<dbReference type="PANTHER" id="PTHR10067:SF6">
    <property type="entry name" value="PHOSPHATIDYLSERINE DECARBOXYLASE PROENZYME, MITOCHONDRIAL"/>
    <property type="match status" value="1"/>
</dbReference>
<dbReference type="Pfam" id="PF02666">
    <property type="entry name" value="PS_Dcarbxylase"/>
    <property type="match status" value="1"/>
</dbReference>
<name>PSD_ALKEH</name>
<proteinExistence type="inferred from homology"/>
<keyword id="KW-1003">Cell membrane</keyword>
<keyword id="KW-0210">Decarboxylase</keyword>
<keyword id="KW-0444">Lipid biosynthesis</keyword>
<keyword id="KW-0443">Lipid metabolism</keyword>
<keyword id="KW-0456">Lyase</keyword>
<keyword id="KW-0472">Membrane</keyword>
<keyword id="KW-0594">Phospholipid biosynthesis</keyword>
<keyword id="KW-1208">Phospholipid metabolism</keyword>
<keyword id="KW-0670">Pyruvate</keyword>
<keyword id="KW-1185">Reference proteome</keyword>
<keyword id="KW-0865">Zymogen</keyword>
<organism>
    <name type="scientific">Alkalilimnicola ehrlichii (strain ATCC BAA-1101 / DSM 17681 / MLHE-1)</name>
    <dbReference type="NCBI Taxonomy" id="187272"/>
    <lineage>
        <taxon>Bacteria</taxon>
        <taxon>Pseudomonadati</taxon>
        <taxon>Pseudomonadota</taxon>
        <taxon>Gammaproteobacteria</taxon>
        <taxon>Chromatiales</taxon>
        <taxon>Ectothiorhodospiraceae</taxon>
        <taxon>Alkalilimnicola</taxon>
    </lineage>
</organism>
<sequence>MSVYRDESPATGLDHLKAALLYPLPHHAISRMVHWAVRVETPWFKNLLIKAFIRVFKVDMSEALEEDPTAYPTFNAFFTRALKPEARPLPDDPDAILSPADGTISQMGPIERDTIFQAKGHSFTTAELLGGDEALAEEFRDGWFATIYLSPRDYHRVHMPMTGTLRQMIHIPGRLFSVAPFTVRTVPKLFARNERVACIFDTDRGPMAVVLVGAINVGSIETVWAGEITPPAGIRAQYSNYEADNAPTIARGHEMGRFNMGSTVITLQNSRPAPGKIMSAHIKQGMTI</sequence>
<comment type="function">
    <text evidence="1">Catalyzes the formation of phosphatidylethanolamine (PtdEtn) from phosphatidylserine (PtdSer).</text>
</comment>
<comment type="catalytic activity">
    <reaction evidence="1">
        <text>a 1,2-diacyl-sn-glycero-3-phospho-L-serine + H(+) = a 1,2-diacyl-sn-glycero-3-phosphoethanolamine + CO2</text>
        <dbReference type="Rhea" id="RHEA:20828"/>
        <dbReference type="ChEBI" id="CHEBI:15378"/>
        <dbReference type="ChEBI" id="CHEBI:16526"/>
        <dbReference type="ChEBI" id="CHEBI:57262"/>
        <dbReference type="ChEBI" id="CHEBI:64612"/>
        <dbReference type="EC" id="4.1.1.65"/>
    </reaction>
</comment>
<comment type="cofactor">
    <cofactor evidence="1">
        <name>pyruvate</name>
        <dbReference type="ChEBI" id="CHEBI:15361"/>
    </cofactor>
    <text evidence="1">Binds 1 pyruvoyl group covalently per subunit.</text>
</comment>
<comment type="pathway">
    <text evidence="1">Phospholipid metabolism; phosphatidylethanolamine biosynthesis; phosphatidylethanolamine from CDP-diacylglycerol: step 2/2.</text>
</comment>
<comment type="subunit">
    <text evidence="1">Heterodimer of a large membrane-associated beta subunit and a small pyruvoyl-containing alpha subunit.</text>
</comment>
<comment type="subcellular location">
    <subcellularLocation>
        <location evidence="1">Cell membrane</location>
        <topology evidence="1">Peripheral membrane protein</topology>
    </subcellularLocation>
</comment>
<comment type="PTM">
    <text evidence="1">Is synthesized initially as an inactive proenzyme. Formation of the active enzyme involves a self-maturation process in which the active site pyruvoyl group is generated from an internal serine residue via an autocatalytic post-translational modification. Two non-identical subunits are generated from the proenzyme in this reaction, and the pyruvate is formed at the N-terminus of the alpha chain, which is derived from the carboxyl end of the proenzyme. The autoendoproteolytic cleavage occurs by a canonical serine protease mechanism, in which the side chain hydroxyl group of the serine supplies its oxygen atom to form the C-terminus of the beta chain, while the remainder of the serine residue undergoes an oxidative deamination to produce ammonia and the pyruvoyl prosthetic group on the alpha chain. During this reaction, the Ser that is part of the protease active site of the proenzyme becomes the pyruvoyl prosthetic group, which constitutes an essential element of the active site of the mature decarboxylase.</text>
</comment>
<comment type="similarity">
    <text evidence="1">Belongs to the phosphatidylserine decarboxylase family. PSD-B subfamily. Prokaryotic type I sub-subfamily.</text>
</comment>
<feature type="chain" id="PRO_0000262091" description="Phosphatidylserine decarboxylase beta chain" evidence="1">
    <location>
        <begin position="1"/>
        <end position="261"/>
    </location>
</feature>
<feature type="chain" id="PRO_0000262092" description="Phosphatidylserine decarboxylase alpha chain" evidence="1">
    <location>
        <begin position="262"/>
        <end position="288"/>
    </location>
</feature>
<feature type="active site" description="Charge relay system; for autoendoproteolytic cleavage activity" evidence="1">
    <location>
        <position position="101"/>
    </location>
</feature>
<feature type="active site" description="Charge relay system; for autoendoproteolytic cleavage activity" evidence="1">
    <location>
        <position position="158"/>
    </location>
</feature>
<feature type="active site" description="Charge relay system; for autoendoproteolytic cleavage activity" evidence="1">
    <location>
        <position position="262"/>
    </location>
</feature>
<feature type="active site" description="Schiff-base intermediate with substrate; via pyruvic acid; for decarboxylase activity" evidence="1">
    <location>
        <position position="262"/>
    </location>
</feature>
<feature type="site" description="Cleavage (non-hydrolytic); by autocatalysis" evidence="1">
    <location>
        <begin position="261"/>
        <end position="262"/>
    </location>
</feature>
<feature type="modified residue" description="Pyruvic acid (Ser); by autocatalysis" evidence="1">
    <location>
        <position position="262"/>
    </location>
</feature>
<protein>
    <recommendedName>
        <fullName evidence="1">Phosphatidylserine decarboxylase proenzyme</fullName>
        <ecNumber evidence="1">4.1.1.65</ecNumber>
    </recommendedName>
    <component>
        <recommendedName>
            <fullName evidence="1">Phosphatidylserine decarboxylase alpha chain</fullName>
        </recommendedName>
    </component>
    <component>
        <recommendedName>
            <fullName evidence="1">Phosphatidylserine decarboxylase beta chain</fullName>
        </recommendedName>
    </component>
</protein>